<sequence>MDLTQIQNPSFLKDMSISELEGLSEDIRKFLIEELSQTGGHIAPNLGVVELTIALHKLFDSPKDKFLWDVGHQSYVHKILTGRAKEFGTLRQYQGLCGFPKRCESEHDVWETGHSSTSLSAAMGMALARDLKKTKEYVIPIIGDGALTGGMALEALNHIGHEKTDMIVILNDNEMSIAPNVGALHNVLGRLRTAGKYHWVKDELEYILKKIPAVGGKVAATAEKIKDSLKYLLVSGVFFEELGFTYLGPVDGHDYEKLFETLQYAKKTKGPVLVHVITKKGKGYKPAESDVIGTWHGTGPYKIESGDFVKPKEVAPAWSAVVSETVLKLARTDERIVAITPAMPVGSKLEKFQKEFPDRMIDVGIAEQHATTMAAGMATQGMKPFLAIYSTFLQRAYDQVVHDICRQNLNVFIGIDRSGLVGADGETHQGVFDISFLRHLPNMVIMMPKDENEGQHLVYTAMQYEDGPIALRYARGNGLGVHMDEELKAIPIGSWETLKEGTQAAILTFGTTIPMAMEAAERLEKAGVSVKVVNARFIKPMDEAYLHDLLGKNIPILTIEEACLIGGFGTGVVEFASENGYHSALVERMGIPDRFIEHGSVTKLLEEIGLTTDAVVDRIHTMIPSKQKRA</sequence>
<dbReference type="EC" id="2.2.1.7" evidence="1"/>
<dbReference type="EMBL" id="CP001598">
    <property type="protein sequence ID" value="ACQ46779.1"/>
    <property type="molecule type" value="Genomic_DNA"/>
</dbReference>
<dbReference type="RefSeq" id="WP_000366447.1">
    <property type="nucleotide sequence ID" value="NC_012659.1"/>
</dbReference>
<dbReference type="SMR" id="C3P7V6"/>
<dbReference type="GeneID" id="45024060"/>
<dbReference type="KEGG" id="bai:BAA_4418"/>
<dbReference type="HOGENOM" id="CLU_009227_1_4_9"/>
<dbReference type="UniPathway" id="UPA00064">
    <property type="reaction ID" value="UER00091"/>
</dbReference>
<dbReference type="GO" id="GO:0005829">
    <property type="term" value="C:cytosol"/>
    <property type="evidence" value="ECO:0007669"/>
    <property type="project" value="TreeGrafter"/>
</dbReference>
<dbReference type="GO" id="GO:0008661">
    <property type="term" value="F:1-deoxy-D-xylulose-5-phosphate synthase activity"/>
    <property type="evidence" value="ECO:0007669"/>
    <property type="project" value="UniProtKB-UniRule"/>
</dbReference>
<dbReference type="GO" id="GO:0000287">
    <property type="term" value="F:magnesium ion binding"/>
    <property type="evidence" value="ECO:0007669"/>
    <property type="project" value="UniProtKB-UniRule"/>
</dbReference>
<dbReference type="GO" id="GO:0030976">
    <property type="term" value="F:thiamine pyrophosphate binding"/>
    <property type="evidence" value="ECO:0007669"/>
    <property type="project" value="UniProtKB-UniRule"/>
</dbReference>
<dbReference type="GO" id="GO:0052865">
    <property type="term" value="P:1-deoxy-D-xylulose 5-phosphate biosynthetic process"/>
    <property type="evidence" value="ECO:0007669"/>
    <property type="project" value="UniProtKB-UniPathway"/>
</dbReference>
<dbReference type="GO" id="GO:0019288">
    <property type="term" value="P:isopentenyl diphosphate biosynthetic process, methylerythritol 4-phosphate pathway"/>
    <property type="evidence" value="ECO:0007669"/>
    <property type="project" value="TreeGrafter"/>
</dbReference>
<dbReference type="GO" id="GO:0016114">
    <property type="term" value="P:terpenoid biosynthetic process"/>
    <property type="evidence" value="ECO:0007669"/>
    <property type="project" value="UniProtKB-UniRule"/>
</dbReference>
<dbReference type="GO" id="GO:0009228">
    <property type="term" value="P:thiamine biosynthetic process"/>
    <property type="evidence" value="ECO:0007669"/>
    <property type="project" value="UniProtKB-UniRule"/>
</dbReference>
<dbReference type="CDD" id="cd02007">
    <property type="entry name" value="TPP_DXS"/>
    <property type="match status" value="1"/>
</dbReference>
<dbReference type="CDD" id="cd07033">
    <property type="entry name" value="TPP_PYR_DXS_TK_like"/>
    <property type="match status" value="1"/>
</dbReference>
<dbReference type="FunFam" id="3.40.50.920:FF:000002">
    <property type="entry name" value="1-deoxy-D-xylulose-5-phosphate synthase"/>
    <property type="match status" value="1"/>
</dbReference>
<dbReference type="FunFam" id="3.40.50.970:FF:000030">
    <property type="entry name" value="1-deoxy-D-xylulose-5-phosphate synthase"/>
    <property type="match status" value="1"/>
</dbReference>
<dbReference type="Gene3D" id="3.40.50.920">
    <property type="match status" value="1"/>
</dbReference>
<dbReference type="Gene3D" id="3.40.50.970">
    <property type="match status" value="2"/>
</dbReference>
<dbReference type="HAMAP" id="MF_00315">
    <property type="entry name" value="DXP_synth"/>
    <property type="match status" value="1"/>
</dbReference>
<dbReference type="InterPro" id="IPR005477">
    <property type="entry name" value="Dxylulose-5-P_synthase"/>
</dbReference>
<dbReference type="InterPro" id="IPR029061">
    <property type="entry name" value="THDP-binding"/>
</dbReference>
<dbReference type="InterPro" id="IPR009014">
    <property type="entry name" value="Transketo_C/PFOR_II"/>
</dbReference>
<dbReference type="InterPro" id="IPR005475">
    <property type="entry name" value="Transketolase-like_Pyr-bd"/>
</dbReference>
<dbReference type="InterPro" id="IPR020826">
    <property type="entry name" value="Transketolase_BS"/>
</dbReference>
<dbReference type="InterPro" id="IPR033248">
    <property type="entry name" value="Transketolase_C"/>
</dbReference>
<dbReference type="InterPro" id="IPR049557">
    <property type="entry name" value="Transketolase_CS"/>
</dbReference>
<dbReference type="NCBIfam" id="TIGR00204">
    <property type="entry name" value="dxs"/>
    <property type="match status" value="1"/>
</dbReference>
<dbReference type="NCBIfam" id="NF003933">
    <property type="entry name" value="PRK05444.2-2"/>
    <property type="match status" value="1"/>
</dbReference>
<dbReference type="PANTHER" id="PTHR43322">
    <property type="entry name" value="1-D-DEOXYXYLULOSE 5-PHOSPHATE SYNTHASE-RELATED"/>
    <property type="match status" value="1"/>
</dbReference>
<dbReference type="PANTHER" id="PTHR43322:SF5">
    <property type="entry name" value="1-DEOXY-D-XYLULOSE-5-PHOSPHATE SYNTHASE, CHLOROPLASTIC"/>
    <property type="match status" value="1"/>
</dbReference>
<dbReference type="Pfam" id="PF13292">
    <property type="entry name" value="DXP_synthase_N"/>
    <property type="match status" value="1"/>
</dbReference>
<dbReference type="Pfam" id="PF02779">
    <property type="entry name" value="Transket_pyr"/>
    <property type="match status" value="1"/>
</dbReference>
<dbReference type="Pfam" id="PF02780">
    <property type="entry name" value="Transketolase_C"/>
    <property type="match status" value="1"/>
</dbReference>
<dbReference type="SMART" id="SM00861">
    <property type="entry name" value="Transket_pyr"/>
    <property type="match status" value="1"/>
</dbReference>
<dbReference type="SUPFAM" id="SSF52518">
    <property type="entry name" value="Thiamin diphosphate-binding fold (THDP-binding)"/>
    <property type="match status" value="2"/>
</dbReference>
<dbReference type="SUPFAM" id="SSF52922">
    <property type="entry name" value="TK C-terminal domain-like"/>
    <property type="match status" value="1"/>
</dbReference>
<dbReference type="PROSITE" id="PS00801">
    <property type="entry name" value="TRANSKETOLASE_1"/>
    <property type="match status" value="1"/>
</dbReference>
<dbReference type="PROSITE" id="PS00802">
    <property type="entry name" value="TRANSKETOLASE_2"/>
    <property type="match status" value="1"/>
</dbReference>
<gene>
    <name evidence="1" type="primary">dxs</name>
    <name type="ordered locus">BAA_4418</name>
</gene>
<accession>C3P7V6</accession>
<organism>
    <name type="scientific">Bacillus anthracis (strain A0248)</name>
    <dbReference type="NCBI Taxonomy" id="592021"/>
    <lineage>
        <taxon>Bacteria</taxon>
        <taxon>Bacillati</taxon>
        <taxon>Bacillota</taxon>
        <taxon>Bacilli</taxon>
        <taxon>Bacillales</taxon>
        <taxon>Bacillaceae</taxon>
        <taxon>Bacillus</taxon>
        <taxon>Bacillus cereus group</taxon>
    </lineage>
</organism>
<feature type="chain" id="PRO_1000132920" description="1-deoxy-D-xylulose-5-phosphate synthase">
    <location>
        <begin position="1"/>
        <end position="630"/>
    </location>
</feature>
<feature type="binding site" evidence="1">
    <location>
        <position position="72"/>
    </location>
    <ligand>
        <name>thiamine diphosphate</name>
        <dbReference type="ChEBI" id="CHEBI:58937"/>
    </ligand>
</feature>
<feature type="binding site" evidence="1">
    <location>
        <begin position="113"/>
        <end position="115"/>
    </location>
    <ligand>
        <name>thiamine diphosphate</name>
        <dbReference type="ChEBI" id="CHEBI:58937"/>
    </ligand>
</feature>
<feature type="binding site" evidence="1">
    <location>
        <position position="144"/>
    </location>
    <ligand>
        <name>Mg(2+)</name>
        <dbReference type="ChEBI" id="CHEBI:18420"/>
    </ligand>
</feature>
<feature type="binding site" evidence="1">
    <location>
        <begin position="145"/>
        <end position="146"/>
    </location>
    <ligand>
        <name>thiamine diphosphate</name>
        <dbReference type="ChEBI" id="CHEBI:58937"/>
    </ligand>
</feature>
<feature type="binding site" evidence="1">
    <location>
        <position position="173"/>
    </location>
    <ligand>
        <name>Mg(2+)</name>
        <dbReference type="ChEBI" id="CHEBI:18420"/>
    </ligand>
</feature>
<feature type="binding site" evidence="1">
    <location>
        <position position="173"/>
    </location>
    <ligand>
        <name>thiamine diphosphate</name>
        <dbReference type="ChEBI" id="CHEBI:58937"/>
    </ligand>
</feature>
<feature type="binding site" evidence="1">
    <location>
        <position position="284"/>
    </location>
    <ligand>
        <name>thiamine diphosphate</name>
        <dbReference type="ChEBI" id="CHEBI:58937"/>
    </ligand>
</feature>
<feature type="binding site" evidence="1">
    <location>
        <position position="367"/>
    </location>
    <ligand>
        <name>thiamine diphosphate</name>
        <dbReference type="ChEBI" id="CHEBI:58937"/>
    </ligand>
</feature>
<comment type="function">
    <text evidence="1">Catalyzes the acyloin condensation reaction between C atoms 2 and 3 of pyruvate and glyceraldehyde 3-phosphate to yield 1-deoxy-D-xylulose-5-phosphate (DXP).</text>
</comment>
<comment type="catalytic activity">
    <reaction evidence="1">
        <text>D-glyceraldehyde 3-phosphate + pyruvate + H(+) = 1-deoxy-D-xylulose 5-phosphate + CO2</text>
        <dbReference type="Rhea" id="RHEA:12605"/>
        <dbReference type="ChEBI" id="CHEBI:15361"/>
        <dbReference type="ChEBI" id="CHEBI:15378"/>
        <dbReference type="ChEBI" id="CHEBI:16526"/>
        <dbReference type="ChEBI" id="CHEBI:57792"/>
        <dbReference type="ChEBI" id="CHEBI:59776"/>
        <dbReference type="EC" id="2.2.1.7"/>
    </reaction>
</comment>
<comment type="cofactor">
    <cofactor evidence="1">
        <name>Mg(2+)</name>
        <dbReference type="ChEBI" id="CHEBI:18420"/>
    </cofactor>
    <text evidence="1">Binds 1 Mg(2+) ion per subunit.</text>
</comment>
<comment type="cofactor">
    <cofactor evidence="1">
        <name>thiamine diphosphate</name>
        <dbReference type="ChEBI" id="CHEBI:58937"/>
    </cofactor>
    <text evidence="1">Binds 1 thiamine pyrophosphate per subunit.</text>
</comment>
<comment type="pathway">
    <text evidence="1">Metabolic intermediate biosynthesis; 1-deoxy-D-xylulose 5-phosphate biosynthesis; 1-deoxy-D-xylulose 5-phosphate from D-glyceraldehyde 3-phosphate and pyruvate: step 1/1.</text>
</comment>
<comment type="subunit">
    <text evidence="1">Homodimer.</text>
</comment>
<comment type="similarity">
    <text evidence="1">Belongs to the transketolase family. DXPS subfamily.</text>
</comment>
<name>DXS_BACAA</name>
<protein>
    <recommendedName>
        <fullName evidence="1">1-deoxy-D-xylulose-5-phosphate synthase</fullName>
        <ecNumber evidence="1">2.2.1.7</ecNumber>
    </recommendedName>
    <alternativeName>
        <fullName evidence="1">1-deoxyxylulose-5-phosphate synthase</fullName>
        <shortName evidence="1">DXP synthase</shortName>
        <shortName evidence="1">DXPS</shortName>
    </alternativeName>
</protein>
<proteinExistence type="inferred from homology"/>
<keyword id="KW-0414">Isoprene biosynthesis</keyword>
<keyword id="KW-0460">Magnesium</keyword>
<keyword id="KW-0479">Metal-binding</keyword>
<keyword id="KW-0784">Thiamine biosynthesis</keyword>
<keyword id="KW-0786">Thiamine pyrophosphate</keyword>
<keyword id="KW-0808">Transferase</keyword>
<evidence type="ECO:0000255" key="1">
    <source>
        <dbReference type="HAMAP-Rule" id="MF_00315"/>
    </source>
</evidence>
<reference key="1">
    <citation type="submission" date="2009-04" db="EMBL/GenBank/DDBJ databases">
        <title>Genome sequence of Bacillus anthracis A0248.</title>
        <authorList>
            <person name="Dodson R.J."/>
            <person name="Munk A.C."/>
            <person name="Bruce D."/>
            <person name="Detter C."/>
            <person name="Tapia R."/>
            <person name="Sutton G."/>
            <person name="Sims D."/>
            <person name="Brettin T."/>
        </authorList>
    </citation>
    <scope>NUCLEOTIDE SEQUENCE [LARGE SCALE GENOMIC DNA]</scope>
    <source>
        <strain>A0248</strain>
    </source>
</reference>